<accession>P21266</accession>
<accession>O60550</accession>
<accession>Q96HA3</accession>
<comment type="function">
    <text evidence="3">Conjugation of reduced glutathione to a wide number of exogenous and endogenous hydrophobic electrophiles. May govern uptake and detoxification of both endogenous compounds and xenobiotics at the testis and brain blood barriers.</text>
</comment>
<comment type="catalytic activity">
    <reaction evidence="3">
        <text>RX + glutathione = an S-substituted glutathione + a halide anion + H(+)</text>
        <dbReference type="Rhea" id="RHEA:16437"/>
        <dbReference type="ChEBI" id="CHEBI:15378"/>
        <dbReference type="ChEBI" id="CHEBI:16042"/>
        <dbReference type="ChEBI" id="CHEBI:17792"/>
        <dbReference type="ChEBI" id="CHEBI:57925"/>
        <dbReference type="ChEBI" id="CHEBI:90779"/>
        <dbReference type="EC" id="2.5.1.18"/>
    </reaction>
</comment>
<comment type="biophysicochemical properties">
    <kinetics>
        <KM evidence="3">1.1 mM for 1-chloro-2,4-dinitrobenzene</KM>
        <KM evidence="3">0.084 mM for glutathione</KM>
    </kinetics>
</comment>
<comment type="subunit">
    <text evidence="3">Homodimer.</text>
</comment>
<comment type="interaction">
    <interactant intactId="EBI-350350">
        <id>P21266</id>
    </interactant>
    <interactant intactId="EBI-12357161">
        <id>Q5SYC1</id>
        <label>CLVS2</label>
    </interactant>
    <organismsDiffer>false</organismsDiffer>
    <experiments>3</experiments>
</comment>
<comment type="interaction">
    <interactant intactId="EBI-350350">
        <id>P21266</id>
    </interactant>
    <interactant intactId="EBI-350350">
        <id>P21266</id>
        <label>GSTM3</label>
    </interactant>
    <organismsDiffer>false</organismsDiffer>
    <experiments>10</experiments>
</comment>
<comment type="interaction">
    <interactant intactId="EBI-350350">
        <id>P21266</id>
    </interactant>
    <interactant intactId="EBI-713363">
        <id>Q03013</id>
        <label>GSTM4</label>
    </interactant>
    <organismsDiffer>false</organismsDiffer>
    <experiments>7</experiments>
</comment>
<comment type="interaction">
    <interactant intactId="EBI-350350">
        <id>P21266</id>
    </interactant>
    <interactant intactId="EBI-4312072">
        <id>P46439</id>
        <label>GSTM5</label>
    </interactant>
    <organismsDiffer>false</organismsDiffer>
    <experiments>14</experiments>
</comment>
<comment type="interaction">
    <interactant intactId="EBI-350350">
        <id>P21266</id>
    </interactant>
    <interactant intactId="EBI-11783805">
        <id>Q12836</id>
        <label>ZP4</label>
    </interactant>
    <organismsDiffer>false</organismsDiffer>
    <experiments>2</experiments>
</comment>
<comment type="subcellular location">
    <subcellularLocation>
        <location>Cytoplasm</location>
    </subcellularLocation>
</comment>
<comment type="tissue specificity">
    <text>Testis and brain.</text>
</comment>
<comment type="PTM">
    <text>The N-terminus is blocked.</text>
</comment>
<comment type="similarity">
    <text evidence="5">Belongs to the GST superfamily. Mu family.</text>
</comment>
<sequence>MSCESSMVLGYWDIRGLAHAIRLLLEFTDTSYEEKRYTCGEAPDYDRSQWLDVKFKLDLDFPNLPYLLDGKNKITQSNAILRYIARKHNMCGETEEEKIRVDIIENQVMDFRTQLIRLCYSSDHEKLKPQYLEELPGQLKQFSMFLGKFSWFAGEKLTFVDFLTYDILDQNRIFDPKCLDEFPNLKAFMCRFEALEKIAAYLQSDQFCKMPINNKMAQWGNKPVC</sequence>
<dbReference type="EC" id="2.5.1.18"/>
<dbReference type="EMBL" id="J05459">
    <property type="protein sequence ID" value="AAA60964.1"/>
    <property type="molecule type" value="mRNA"/>
</dbReference>
<dbReference type="EMBL" id="AF043105">
    <property type="protein sequence ID" value="AAC17866.1"/>
    <property type="molecule type" value="Genomic_DNA"/>
</dbReference>
<dbReference type="EMBL" id="BT019945">
    <property type="protein sequence ID" value="AAV38748.1"/>
    <property type="molecule type" value="mRNA"/>
</dbReference>
<dbReference type="EMBL" id="BC000088">
    <property type="protein sequence ID" value="AAH00088.1"/>
    <property type="molecule type" value="mRNA"/>
</dbReference>
<dbReference type="EMBL" id="BC008790">
    <property type="protein sequence ID" value="AAH08790.1"/>
    <property type="molecule type" value="mRNA"/>
</dbReference>
<dbReference type="CCDS" id="CCDS812.1"/>
<dbReference type="PIR" id="A35295">
    <property type="entry name" value="A35295"/>
</dbReference>
<dbReference type="RefSeq" id="NP_000840.2">
    <property type="nucleotide sequence ID" value="NM_000849.4"/>
</dbReference>
<dbReference type="PDB" id="3GTU">
    <property type="method" value="X-ray"/>
    <property type="resolution" value="2.80 A"/>
    <property type="chains" value="B/D=2-225"/>
</dbReference>
<dbReference type="PDBsum" id="3GTU"/>
<dbReference type="SMR" id="P21266"/>
<dbReference type="BioGRID" id="109202">
    <property type="interactions" value="163"/>
</dbReference>
<dbReference type="FunCoup" id="P21266">
    <property type="interactions" value="445"/>
</dbReference>
<dbReference type="IntAct" id="P21266">
    <property type="interactions" value="56"/>
</dbReference>
<dbReference type="MINT" id="P21266"/>
<dbReference type="STRING" id="9606.ENSP00000354357"/>
<dbReference type="ChEMBL" id="CHEMBL2242"/>
<dbReference type="DrugBank" id="DB14001">
    <property type="generic name" value="alpha-Tocopherol succinate"/>
</dbReference>
<dbReference type="DrugBank" id="DB00321">
    <property type="generic name" value="Amitriptyline"/>
</dbReference>
<dbReference type="DrugBank" id="DB00291">
    <property type="generic name" value="Chlorambucil"/>
</dbReference>
<dbReference type="DrugBank" id="DB14002">
    <property type="generic name" value="D-alpha-Tocopherol acetate"/>
</dbReference>
<dbReference type="DrugBank" id="DB03619">
    <property type="generic name" value="Deoxycholic acid"/>
</dbReference>
<dbReference type="DrugBank" id="DB00143">
    <property type="generic name" value="Glutathione"/>
</dbReference>
<dbReference type="DrugBank" id="DB03310">
    <property type="generic name" value="Glutathione disulfide"/>
</dbReference>
<dbReference type="DrugBank" id="DB14924">
    <property type="generic name" value="Ritlecitinib"/>
</dbReference>
<dbReference type="DrugBank" id="DB00163">
    <property type="generic name" value="Vitamin E"/>
</dbReference>
<dbReference type="MoonProt" id="P21266"/>
<dbReference type="GlyGen" id="P21266">
    <property type="glycosylation" value="1 site, 1 O-linked glycan (1 site)"/>
</dbReference>
<dbReference type="iPTMnet" id="P21266"/>
<dbReference type="MetOSite" id="P21266"/>
<dbReference type="PhosphoSitePlus" id="P21266"/>
<dbReference type="SwissPalm" id="P21266"/>
<dbReference type="BioMuta" id="GSTM3"/>
<dbReference type="DMDM" id="21264423"/>
<dbReference type="OGP" id="P21266"/>
<dbReference type="REPRODUCTION-2DPAGE" id="IPI00246975"/>
<dbReference type="jPOST" id="P21266"/>
<dbReference type="MassIVE" id="P21266"/>
<dbReference type="PaxDb" id="9606-ENSP00000256594"/>
<dbReference type="PeptideAtlas" id="P21266"/>
<dbReference type="ProteomicsDB" id="53855"/>
<dbReference type="Pumba" id="P21266"/>
<dbReference type="Antibodypedia" id="33773">
    <property type="antibodies" value="220 antibodies from 31 providers"/>
</dbReference>
<dbReference type="CPTC" id="P21266">
    <property type="antibodies" value="3 antibodies"/>
</dbReference>
<dbReference type="DNASU" id="2947"/>
<dbReference type="Ensembl" id="ENST00000256594.7">
    <property type="protein sequence ID" value="ENSP00000256594.3"/>
    <property type="gene ID" value="ENSG00000134202.12"/>
</dbReference>
<dbReference type="Ensembl" id="ENST00000361066.7">
    <property type="protein sequence ID" value="ENSP00000354357.2"/>
    <property type="gene ID" value="ENSG00000134202.12"/>
</dbReference>
<dbReference type="GeneID" id="2947"/>
<dbReference type="KEGG" id="hsa:2947"/>
<dbReference type="MANE-Select" id="ENST00000361066.7">
    <property type="protein sequence ID" value="ENSP00000354357.2"/>
    <property type="RefSeq nucleotide sequence ID" value="NM_000849.5"/>
    <property type="RefSeq protein sequence ID" value="NP_000840.2"/>
</dbReference>
<dbReference type="AGR" id="HGNC:4635"/>
<dbReference type="CTD" id="2947"/>
<dbReference type="DisGeNET" id="2947"/>
<dbReference type="GeneCards" id="GSTM3"/>
<dbReference type="HGNC" id="HGNC:4635">
    <property type="gene designation" value="GSTM3"/>
</dbReference>
<dbReference type="HPA" id="ENSG00000134202">
    <property type="expression patterns" value="Tissue enhanced (choroid)"/>
</dbReference>
<dbReference type="MalaCards" id="GSTM3"/>
<dbReference type="MIM" id="138390">
    <property type="type" value="gene"/>
</dbReference>
<dbReference type="neXtProt" id="NX_P21266"/>
<dbReference type="OpenTargets" id="ENSG00000134202"/>
<dbReference type="Orphanet" id="586">
    <property type="disease" value="Cystic fibrosis"/>
</dbReference>
<dbReference type="PharmGKB" id="PA29024"/>
<dbReference type="VEuPathDB" id="HostDB:ENSG00000134202"/>
<dbReference type="eggNOG" id="KOG1695">
    <property type="taxonomic scope" value="Eukaryota"/>
</dbReference>
<dbReference type="GeneTree" id="ENSGT00940000157663"/>
<dbReference type="HOGENOM" id="CLU_039475_2_0_1"/>
<dbReference type="InParanoid" id="P21266"/>
<dbReference type="OMA" id="ICDFHIY"/>
<dbReference type="OrthoDB" id="4951845at2759"/>
<dbReference type="PAN-GO" id="P21266">
    <property type="GO annotations" value="2 GO annotations based on evolutionary models"/>
</dbReference>
<dbReference type="PhylomeDB" id="P21266"/>
<dbReference type="TreeFam" id="TF353040"/>
<dbReference type="BRENDA" id="2.5.1.18">
    <property type="organism ID" value="2681"/>
</dbReference>
<dbReference type="PathwayCommons" id="P21266"/>
<dbReference type="Reactome" id="R-HSA-156590">
    <property type="pathway name" value="Glutathione conjugation"/>
</dbReference>
<dbReference type="SABIO-RK" id="P21266"/>
<dbReference type="SignaLink" id="P21266"/>
<dbReference type="BioGRID-ORCS" id="2947">
    <property type="hits" value="6 hits in 1155 CRISPR screens"/>
</dbReference>
<dbReference type="CD-CODE" id="FB4E32DD">
    <property type="entry name" value="Presynaptic clusters and postsynaptic densities"/>
</dbReference>
<dbReference type="EvolutionaryTrace" id="P21266"/>
<dbReference type="GeneWiki" id="GSTM3"/>
<dbReference type="GenomeRNAi" id="2947"/>
<dbReference type="Pharos" id="P21266">
    <property type="development level" value="Tbio"/>
</dbReference>
<dbReference type="PRO" id="PR:P21266"/>
<dbReference type="Proteomes" id="UP000005640">
    <property type="component" value="Chromosome 1"/>
</dbReference>
<dbReference type="RNAct" id="P21266">
    <property type="molecule type" value="protein"/>
</dbReference>
<dbReference type="Bgee" id="ENSG00000134202">
    <property type="expression patterns" value="Expressed in right testis and 209 other cell types or tissues"/>
</dbReference>
<dbReference type="ExpressionAtlas" id="P21266">
    <property type="expression patterns" value="baseline and differential"/>
</dbReference>
<dbReference type="GO" id="GO:0005737">
    <property type="term" value="C:cytoplasm"/>
    <property type="evidence" value="ECO:0000314"/>
    <property type="project" value="BHF-UCL"/>
</dbReference>
<dbReference type="GO" id="GO:0005829">
    <property type="term" value="C:cytosol"/>
    <property type="evidence" value="ECO:0000304"/>
    <property type="project" value="Reactome"/>
</dbReference>
<dbReference type="GO" id="GO:0070062">
    <property type="term" value="C:extracellular exosome"/>
    <property type="evidence" value="ECO:0007005"/>
    <property type="project" value="UniProtKB"/>
</dbReference>
<dbReference type="GO" id="GO:0045171">
    <property type="term" value="C:intercellular bridge"/>
    <property type="evidence" value="ECO:0007669"/>
    <property type="project" value="UniProtKB-ARBA"/>
</dbReference>
<dbReference type="GO" id="GO:0005634">
    <property type="term" value="C:nucleus"/>
    <property type="evidence" value="ECO:0007005"/>
    <property type="project" value="UniProtKB"/>
</dbReference>
<dbReference type="GO" id="GO:0035686">
    <property type="term" value="C:sperm fibrous sheath"/>
    <property type="evidence" value="ECO:0007669"/>
    <property type="project" value="Ensembl"/>
</dbReference>
<dbReference type="GO" id="GO:0019899">
    <property type="term" value="F:enzyme binding"/>
    <property type="evidence" value="ECO:0000353"/>
    <property type="project" value="BHF-UCL"/>
</dbReference>
<dbReference type="GO" id="GO:0043295">
    <property type="term" value="F:glutathione binding"/>
    <property type="evidence" value="ECO:0000314"/>
    <property type="project" value="BHF-UCL"/>
</dbReference>
<dbReference type="GO" id="GO:0004364">
    <property type="term" value="F:glutathione transferase activity"/>
    <property type="evidence" value="ECO:0000314"/>
    <property type="project" value="UniProtKB"/>
</dbReference>
<dbReference type="GO" id="GO:0042802">
    <property type="term" value="F:identical protein binding"/>
    <property type="evidence" value="ECO:0000353"/>
    <property type="project" value="IntAct"/>
</dbReference>
<dbReference type="GO" id="GO:0042803">
    <property type="term" value="F:protein homodimerization activity"/>
    <property type="evidence" value="ECO:0000314"/>
    <property type="project" value="MGI"/>
</dbReference>
<dbReference type="GO" id="GO:0070458">
    <property type="term" value="P:cellular detoxification of nitrogen compound"/>
    <property type="evidence" value="ECO:0000314"/>
    <property type="project" value="BHF-UCL"/>
</dbReference>
<dbReference type="GO" id="GO:0008065">
    <property type="term" value="P:establishment of blood-nerve barrier"/>
    <property type="evidence" value="ECO:0000304"/>
    <property type="project" value="ProtInc"/>
</dbReference>
<dbReference type="GO" id="GO:0006749">
    <property type="term" value="P:glutathione metabolic process"/>
    <property type="evidence" value="ECO:0000314"/>
    <property type="project" value="UniProtKB"/>
</dbReference>
<dbReference type="GO" id="GO:0018916">
    <property type="term" value="P:nitrobenzene metabolic process"/>
    <property type="evidence" value="ECO:0000314"/>
    <property type="project" value="BHF-UCL"/>
</dbReference>
<dbReference type="GO" id="GO:0043627">
    <property type="term" value="P:response to estrogen"/>
    <property type="evidence" value="ECO:0000270"/>
    <property type="project" value="UniProtKB"/>
</dbReference>
<dbReference type="GO" id="GO:0042178">
    <property type="term" value="P:xenobiotic catabolic process"/>
    <property type="evidence" value="ECO:0000314"/>
    <property type="project" value="BHF-UCL"/>
</dbReference>
<dbReference type="CDD" id="cd03209">
    <property type="entry name" value="GST_C_Mu"/>
    <property type="match status" value="1"/>
</dbReference>
<dbReference type="CDD" id="cd03075">
    <property type="entry name" value="GST_N_Mu"/>
    <property type="match status" value="1"/>
</dbReference>
<dbReference type="FunFam" id="1.20.1050.10:FF:000003">
    <property type="entry name" value="Glutathione S-transferase 2"/>
    <property type="match status" value="1"/>
</dbReference>
<dbReference type="FunFam" id="3.40.30.10:FF:000603">
    <property type="entry name" value="Glutathione S-transferase Mu 1"/>
    <property type="match status" value="1"/>
</dbReference>
<dbReference type="Gene3D" id="1.20.1050.10">
    <property type="match status" value="1"/>
</dbReference>
<dbReference type="Gene3D" id="3.40.30.10">
    <property type="entry name" value="Glutaredoxin"/>
    <property type="match status" value="1"/>
</dbReference>
<dbReference type="InterPro" id="IPR010987">
    <property type="entry name" value="Glutathione-S-Trfase_C-like"/>
</dbReference>
<dbReference type="InterPro" id="IPR036282">
    <property type="entry name" value="Glutathione-S-Trfase_C_sf"/>
</dbReference>
<dbReference type="InterPro" id="IPR040079">
    <property type="entry name" value="Glutathione_S-Trfase"/>
</dbReference>
<dbReference type="InterPro" id="IPR004045">
    <property type="entry name" value="Glutathione_S-Trfase_N"/>
</dbReference>
<dbReference type="InterPro" id="IPR004046">
    <property type="entry name" value="GST_C"/>
</dbReference>
<dbReference type="InterPro" id="IPR003081">
    <property type="entry name" value="GST_mu"/>
</dbReference>
<dbReference type="InterPro" id="IPR050213">
    <property type="entry name" value="GST_superfamily"/>
</dbReference>
<dbReference type="InterPro" id="IPR036249">
    <property type="entry name" value="Thioredoxin-like_sf"/>
</dbReference>
<dbReference type="PANTHER" id="PTHR11571">
    <property type="entry name" value="GLUTATHIONE S-TRANSFERASE"/>
    <property type="match status" value="1"/>
</dbReference>
<dbReference type="PANTHER" id="PTHR11571:SF133">
    <property type="entry name" value="GLUTATHIONE S-TRANSFERASE MU 3"/>
    <property type="match status" value="1"/>
</dbReference>
<dbReference type="Pfam" id="PF00043">
    <property type="entry name" value="GST_C"/>
    <property type="match status" value="1"/>
</dbReference>
<dbReference type="Pfam" id="PF02798">
    <property type="entry name" value="GST_N"/>
    <property type="match status" value="1"/>
</dbReference>
<dbReference type="PRINTS" id="PR01267">
    <property type="entry name" value="GSTRNSFRASEM"/>
</dbReference>
<dbReference type="SFLD" id="SFLDG01205">
    <property type="entry name" value="AMPS.1"/>
    <property type="match status" value="1"/>
</dbReference>
<dbReference type="SFLD" id="SFLDS00019">
    <property type="entry name" value="Glutathione_Transferase_(cytos"/>
    <property type="match status" value="1"/>
</dbReference>
<dbReference type="SUPFAM" id="SSF47616">
    <property type="entry name" value="GST C-terminal domain-like"/>
    <property type="match status" value="1"/>
</dbReference>
<dbReference type="SUPFAM" id="SSF52833">
    <property type="entry name" value="Thioredoxin-like"/>
    <property type="match status" value="1"/>
</dbReference>
<dbReference type="PROSITE" id="PS50405">
    <property type="entry name" value="GST_CTER"/>
    <property type="match status" value="1"/>
</dbReference>
<dbReference type="PROSITE" id="PS50404">
    <property type="entry name" value="GST_NTER"/>
    <property type="match status" value="1"/>
</dbReference>
<feature type="chain" id="PRO_0000185822" description="Glutathione S-transferase Mu 3">
    <location>
        <begin position="1"/>
        <end position="225"/>
    </location>
</feature>
<feature type="domain" description="GST N-terminal">
    <location>
        <begin position="5"/>
        <end position="92"/>
    </location>
</feature>
<feature type="domain" description="GST C-terminal">
    <location>
        <begin position="94"/>
        <end position="212"/>
    </location>
</feature>
<feature type="binding site" evidence="2">
    <location>
        <begin position="11"/>
        <end position="12"/>
    </location>
    <ligand>
        <name>glutathione</name>
        <dbReference type="ChEBI" id="CHEBI:57925"/>
    </ligand>
</feature>
<feature type="binding site" evidence="2">
    <location>
        <begin position="50"/>
        <end position="54"/>
    </location>
    <ligand>
        <name>glutathione</name>
        <dbReference type="ChEBI" id="CHEBI:57925"/>
    </ligand>
</feature>
<feature type="binding site" evidence="2">
    <location>
        <begin position="63"/>
        <end position="64"/>
    </location>
    <ligand>
        <name>glutathione</name>
        <dbReference type="ChEBI" id="CHEBI:57925"/>
    </ligand>
</feature>
<feature type="binding site" evidence="2">
    <location>
        <begin position="76"/>
        <end position="77"/>
    </location>
    <ligand>
        <name>glutathione</name>
        <dbReference type="ChEBI" id="CHEBI:57925"/>
    </ligand>
</feature>
<feature type="binding site" evidence="1">
    <location>
        <position position="120"/>
    </location>
    <ligand>
        <name>substrate</name>
    </ligand>
</feature>
<feature type="cross-link" description="Glycyl lysine isopeptide (Lys-Gly) (interchain with G-Cter in SUMO2)" evidence="6">
    <location>
        <position position="54"/>
    </location>
</feature>
<feature type="cross-link" description="Glycyl lysine isopeptide (Lys-Gly) (interchain with G-Cter in SUMO2)" evidence="6">
    <location>
        <position position="73"/>
    </location>
</feature>
<feature type="sequence variant" id="VAR_014498" description="In dbSNP:rs7483." evidence="4">
    <original>V</original>
    <variation>I</variation>
    <location>
        <position position="224"/>
    </location>
</feature>
<feature type="mutagenesis site" description="No effect." evidence="3">
    <original>Y</original>
    <variation>A</variation>
    <location>
        <position position="120"/>
    </location>
</feature>
<feature type="mutagenesis site" description="Strongly increased catalytic activity." evidence="3">
    <original>Y</original>
    <variation>F</variation>
    <location>
        <position position="120"/>
    </location>
</feature>
<feature type="mutagenesis site" description="Strongly increased catalytic activity." evidence="3">
    <original>N</original>
    <variation>F</variation>
    <location>
        <position position="213"/>
    </location>
</feature>
<feature type="mutagenesis site" description="No effect." evidence="3">
    <original>N</original>
    <variation>G</variation>
    <location>
        <position position="213"/>
    </location>
</feature>
<feature type="sequence conflict" description="In Ref. 1; AAA60964." evidence="5" ref="1">
    <original>G</original>
    <variation>W</variation>
    <location>
        <position position="147"/>
    </location>
</feature>
<feature type="strand" evidence="7">
    <location>
        <begin position="7"/>
        <end position="15"/>
    </location>
</feature>
<feature type="helix" evidence="7">
    <location>
        <begin position="16"/>
        <end position="18"/>
    </location>
</feature>
<feature type="helix" evidence="7">
    <location>
        <begin position="19"/>
        <end position="27"/>
    </location>
</feature>
<feature type="strand" evidence="7">
    <location>
        <begin position="32"/>
        <end position="37"/>
    </location>
</feature>
<feature type="strand" evidence="7">
    <location>
        <begin position="42"/>
        <end position="44"/>
    </location>
</feature>
<feature type="helix" evidence="7">
    <location>
        <begin position="48"/>
        <end position="54"/>
    </location>
</feature>
<feature type="strand" evidence="7">
    <location>
        <begin position="64"/>
        <end position="69"/>
    </location>
</feature>
<feature type="strand" evidence="7">
    <location>
        <begin position="72"/>
        <end position="76"/>
    </location>
</feature>
<feature type="helix" evidence="7">
    <location>
        <begin position="77"/>
        <end position="87"/>
    </location>
</feature>
<feature type="helix" evidence="7">
    <location>
        <begin position="95"/>
        <end position="120"/>
    </location>
</feature>
<feature type="helix" evidence="7">
    <location>
        <begin position="124"/>
        <end position="146"/>
    </location>
</feature>
<feature type="strand" evidence="7">
    <location>
        <begin position="154"/>
        <end position="156"/>
    </location>
</feature>
<feature type="helix" evidence="7">
    <location>
        <begin position="159"/>
        <end position="174"/>
    </location>
</feature>
<feature type="helix" evidence="7">
    <location>
        <begin position="176"/>
        <end position="179"/>
    </location>
</feature>
<feature type="helix" evidence="7">
    <location>
        <begin position="183"/>
        <end position="193"/>
    </location>
</feature>
<feature type="helix" evidence="7">
    <location>
        <begin position="196"/>
        <end position="203"/>
    </location>
</feature>
<feature type="helix" evidence="7">
    <location>
        <begin position="205"/>
        <end position="208"/>
    </location>
</feature>
<feature type="strand" evidence="7">
    <location>
        <begin position="211"/>
        <end position="213"/>
    </location>
</feature>
<feature type="strand" evidence="7">
    <location>
        <begin position="217"/>
        <end position="220"/>
    </location>
</feature>
<organism>
    <name type="scientific">Homo sapiens</name>
    <name type="common">Human</name>
    <dbReference type="NCBI Taxonomy" id="9606"/>
    <lineage>
        <taxon>Eukaryota</taxon>
        <taxon>Metazoa</taxon>
        <taxon>Chordata</taxon>
        <taxon>Craniata</taxon>
        <taxon>Vertebrata</taxon>
        <taxon>Euteleostomi</taxon>
        <taxon>Mammalia</taxon>
        <taxon>Eutheria</taxon>
        <taxon>Euarchontoglires</taxon>
        <taxon>Primates</taxon>
        <taxon>Haplorrhini</taxon>
        <taxon>Catarrhini</taxon>
        <taxon>Hominidae</taxon>
        <taxon>Homo</taxon>
    </lineage>
</organism>
<reference key="1">
    <citation type="journal article" date="1990" name="J. Biol. Chem.">
        <title>A distinct human testis and brain mu-class glutathione S-transferase. Molecular cloning and characterization of a form present even in individuals lacking hepatic type mu isoenzymes.</title>
        <authorList>
            <person name="Campbell E."/>
            <person name="Takahashi Y."/>
            <person name="Abramovitz M."/>
            <person name="Peretz M."/>
            <person name="Listowsky I."/>
        </authorList>
    </citation>
    <scope>NUCLEOTIDE SEQUENCE [MRNA]</scope>
    <scope>PARTIAL PROTEIN SEQUENCE</scope>
    <source>
        <tissue>Brain</tissue>
        <tissue>Testis</tissue>
    </source>
</reference>
<reference key="2">
    <citation type="journal article" date="1999" name="Arch. Biochem. Biophys.">
        <title>Distinctive structure of the human GSTM3 gene-inverted orientation relative to the mu class glutathione transferase gene cluster.</title>
        <authorList>
            <person name="Patskovsky Y.V."/>
            <person name="Huang M.Q."/>
            <person name="Takayama T."/>
            <person name="Listowsky I."/>
            <person name="Pearson W.R."/>
        </authorList>
    </citation>
    <scope>NUCLEOTIDE SEQUENCE [GENOMIC DNA]</scope>
</reference>
<reference key="3">
    <citation type="submission" date="2003-05" db="EMBL/GenBank/DDBJ databases">
        <title>Cloning of human full-length CDSs in BD Creator(TM) system donor vector.</title>
        <authorList>
            <person name="Kalnine N."/>
            <person name="Chen X."/>
            <person name="Rolfs A."/>
            <person name="Halleck A."/>
            <person name="Hines L."/>
            <person name="Eisenstein S."/>
            <person name="Koundinya M."/>
            <person name="Raphael J."/>
            <person name="Moreira D."/>
            <person name="Kelley T."/>
            <person name="LaBaer J."/>
            <person name="Lin Y."/>
            <person name="Phelan M."/>
            <person name="Farmer A."/>
        </authorList>
    </citation>
    <scope>NUCLEOTIDE SEQUENCE [LARGE SCALE MRNA]</scope>
</reference>
<reference key="4">
    <citation type="journal article" date="2004" name="Genome Res.">
        <title>The status, quality, and expansion of the NIH full-length cDNA project: the Mammalian Gene Collection (MGC).</title>
        <authorList>
            <consortium name="The MGC Project Team"/>
        </authorList>
    </citation>
    <scope>NUCLEOTIDE SEQUENCE [LARGE SCALE MRNA]</scope>
    <scope>VARIANT ILE-224</scope>
    <source>
        <tissue>Brain</tissue>
        <tissue>Uterus</tissue>
    </source>
</reference>
<reference key="5">
    <citation type="journal article" date="1993" name="Biochem. J.">
        <title>Molecular cloning and heterologous expression of an alternatively spliced human Mu class glutathione S-transferase transcript.</title>
        <authorList>
            <person name="Ross V.L."/>
            <person name="Board P.G."/>
        </authorList>
    </citation>
    <scope>PROTEIN SEQUENCE OF N-TERMINUS</scope>
    <source>
        <tissue>Testis</tissue>
    </source>
</reference>
<reference key="6">
    <citation type="journal article" date="1993" name="Biochim. Biophys. Acta">
        <title>Human Mu-class glutathione S-transferases present in liver, skeletal muscle and testicular tissue.</title>
        <authorList>
            <person name="Hussey A.J."/>
            <person name="Hayes J.D."/>
        </authorList>
    </citation>
    <scope>PROTEIN SEQUENCE OF 190-209</scope>
</reference>
<reference key="7">
    <citation type="journal article" date="2011" name="BMC Syst. Biol.">
        <title>Initial characterization of the human central proteome.</title>
        <authorList>
            <person name="Burkard T.R."/>
            <person name="Planyavsky M."/>
            <person name="Kaupe I."/>
            <person name="Breitwieser F.P."/>
            <person name="Buerckstuemmer T."/>
            <person name="Bennett K.L."/>
            <person name="Superti-Furga G."/>
            <person name="Colinge J."/>
        </authorList>
    </citation>
    <scope>IDENTIFICATION BY MASS SPECTROMETRY [LARGE SCALE ANALYSIS]</scope>
</reference>
<reference key="8">
    <citation type="journal article" date="2017" name="Nat. Struct. Mol. Biol.">
        <title>Site-specific mapping of the human SUMO proteome reveals co-modification with phosphorylation.</title>
        <authorList>
            <person name="Hendriks I.A."/>
            <person name="Lyon D."/>
            <person name="Young C."/>
            <person name="Jensen L.J."/>
            <person name="Vertegaal A.C."/>
            <person name="Nielsen M.L."/>
        </authorList>
    </citation>
    <scope>SUMOYLATION [LARGE SCALE ANALYSIS] AT LYS-54 AND LYS-73</scope>
    <scope>IDENTIFICATION BY MASS SPECTROMETRY [LARGE SCALE ANALYSIS]</scope>
</reference>
<reference key="9">
    <citation type="journal article" date="1999" name="Biochemistry">
        <title>An asparagine-phenylalanine substitution accounts for catalytic differences between hGSTM3-3 and other human class mu glutathione S-transferases.</title>
        <authorList>
            <person name="Patskovsky Y.V."/>
            <person name="Patskovska L.N."/>
            <person name="Listowsky I."/>
        </authorList>
    </citation>
    <scope>X-RAY CRYSTALLOGRAPHY (2.8 ANGSTROMS)</scope>
    <scope>CATALYTIC ACTIVITY</scope>
    <scope>FUNCTION</scope>
    <scope>BIOPHYSICOCHEMICAL PROPERTIES</scope>
    <scope>SUBUNIT</scope>
    <scope>MUTAGENESIS OF TYR-120 AND ASN-213</scope>
</reference>
<name>GSTM3_HUMAN</name>
<protein>
    <recommendedName>
        <fullName>Glutathione S-transferase Mu 3</fullName>
        <ecNumber>2.5.1.18</ecNumber>
    </recommendedName>
    <alternativeName>
        <fullName>GST class-mu 3</fullName>
    </alternativeName>
    <alternativeName>
        <fullName>GSTM3-3</fullName>
        <shortName>hGSTM3-3</shortName>
    </alternativeName>
</protein>
<proteinExistence type="evidence at protein level"/>
<evidence type="ECO:0000250" key="1"/>
<evidence type="ECO:0000250" key="2">
    <source>
        <dbReference type="UniProtKB" id="P08515"/>
    </source>
</evidence>
<evidence type="ECO:0000269" key="3">
    <source>
    </source>
</evidence>
<evidence type="ECO:0000269" key="4">
    <source>
    </source>
</evidence>
<evidence type="ECO:0000305" key="5"/>
<evidence type="ECO:0007744" key="6">
    <source>
    </source>
</evidence>
<evidence type="ECO:0007829" key="7">
    <source>
        <dbReference type="PDB" id="3GTU"/>
    </source>
</evidence>
<gene>
    <name type="primary">GSTM3</name>
    <name type="synonym">GST5</name>
</gene>
<keyword id="KW-0002">3D-structure</keyword>
<keyword id="KW-0963">Cytoplasm</keyword>
<keyword id="KW-0903">Direct protein sequencing</keyword>
<keyword id="KW-1017">Isopeptide bond</keyword>
<keyword id="KW-1267">Proteomics identification</keyword>
<keyword id="KW-1185">Reference proteome</keyword>
<keyword id="KW-0808">Transferase</keyword>
<keyword id="KW-0832">Ubl conjugation</keyword>